<keyword id="KW-0963">Cytoplasm</keyword>
<keyword id="KW-0328">Glycosyltransferase</keyword>
<keyword id="KW-0660">Purine salvage</keyword>
<keyword id="KW-0808">Transferase</keyword>
<dbReference type="EC" id="2.4.2.7" evidence="1"/>
<dbReference type="EMBL" id="CP000056">
    <property type="protein sequence ID" value="AAX71821.1"/>
    <property type="molecule type" value="Genomic_DNA"/>
</dbReference>
<dbReference type="RefSeq" id="WP_002990109.1">
    <property type="nucleotide sequence ID" value="NC_007296.2"/>
</dbReference>
<dbReference type="SMR" id="Q48TY5"/>
<dbReference type="KEGG" id="spb:M28_Spy0708"/>
<dbReference type="HOGENOM" id="CLU_063339_3_0_9"/>
<dbReference type="UniPathway" id="UPA00588">
    <property type="reaction ID" value="UER00646"/>
</dbReference>
<dbReference type="GO" id="GO:0005737">
    <property type="term" value="C:cytoplasm"/>
    <property type="evidence" value="ECO:0007669"/>
    <property type="project" value="UniProtKB-SubCell"/>
</dbReference>
<dbReference type="GO" id="GO:0002055">
    <property type="term" value="F:adenine binding"/>
    <property type="evidence" value="ECO:0007669"/>
    <property type="project" value="TreeGrafter"/>
</dbReference>
<dbReference type="GO" id="GO:0003999">
    <property type="term" value="F:adenine phosphoribosyltransferase activity"/>
    <property type="evidence" value="ECO:0007669"/>
    <property type="project" value="UniProtKB-UniRule"/>
</dbReference>
<dbReference type="GO" id="GO:0016208">
    <property type="term" value="F:AMP binding"/>
    <property type="evidence" value="ECO:0007669"/>
    <property type="project" value="TreeGrafter"/>
</dbReference>
<dbReference type="GO" id="GO:0006168">
    <property type="term" value="P:adenine salvage"/>
    <property type="evidence" value="ECO:0007669"/>
    <property type="project" value="InterPro"/>
</dbReference>
<dbReference type="GO" id="GO:0044209">
    <property type="term" value="P:AMP salvage"/>
    <property type="evidence" value="ECO:0007669"/>
    <property type="project" value="UniProtKB-UniRule"/>
</dbReference>
<dbReference type="GO" id="GO:0006166">
    <property type="term" value="P:purine ribonucleoside salvage"/>
    <property type="evidence" value="ECO:0007669"/>
    <property type="project" value="UniProtKB-KW"/>
</dbReference>
<dbReference type="CDD" id="cd06223">
    <property type="entry name" value="PRTases_typeI"/>
    <property type="match status" value="1"/>
</dbReference>
<dbReference type="FunFam" id="3.40.50.2020:FF:000004">
    <property type="entry name" value="Adenine phosphoribosyltransferase"/>
    <property type="match status" value="1"/>
</dbReference>
<dbReference type="Gene3D" id="3.40.50.2020">
    <property type="match status" value="1"/>
</dbReference>
<dbReference type="HAMAP" id="MF_00004">
    <property type="entry name" value="Aden_phosphoribosyltr"/>
    <property type="match status" value="1"/>
</dbReference>
<dbReference type="InterPro" id="IPR005764">
    <property type="entry name" value="Ade_phspho_trans"/>
</dbReference>
<dbReference type="InterPro" id="IPR000836">
    <property type="entry name" value="PRibTrfase_dom"/>
</dbReference>
<dbReference type="InterPro" id="IPR029057">
    <property type="entry name" value="PRTase-like"/>
</dbReference>
<dbReference type="InterPro" id="IPR050054">
    <property type="entry name" value="UPRTase/APRTase"/>
</dbReference>
<dbReference type="NCBIfam" id="TIGR01090">
    <property type="entry name" value="apt"/>
    <property type="match status" value="1"/>
</dbReference>
<dbReference type="NCBIfam" id="NF002633">
    <property type="entry name" value="PRK02304.1-2"/>
    <property type="match status" value="1"/>
</dbReference>
<dbReference type="NCBIfam" id="NF002634">
    <property type="entry name" value="PRK02304.1-3"/>
    <property type="match status" value="1"/>
</dbReference>
<dbReference type="NCBIfam" id="NF002636">
    <property type="entry name" value="PRK02304.1-5"/>
    <property type="match status" value="1"/>
</dbReference>
<dbReference type="PANTHER" id="PTHR32315">
    <property type="entry name" value="ADENINE PHOSPHORIBOSYLTRANSFERASE"/>
    <property type="match status" value="1"/>
</dbReference>
<dbReference type="PANTHER" id="PTHR32315:SF3">
    <property type="entry name" value="ADENINE PHOSPHORIBOSYLTRANSFERASE"/>
    <property type="match status" value="1"/>
</dbReference>
<dbReference type="Pfam" id="PF00156">
    <property type="entry name" value="Pribosyltran"/>
    <property type="match status" value="1"/>
</dbReference>
<dbReference type="SUPFAM" id="SSF53271">
    <property type="entry name" value="PRTase-like"/>
    <property type="match status" value="1"/>
</dbReference>
<dbReference type="PROSITE" id="PS00103">
    <property type="entry name" value="PUR_PYR_PR_TRANSFER"/>
    <property type="match status" value="1"/>
</dbReference>
<proteinExistence type="inferred from homology"/>
<gene>
    <name evidence="1" type="primary">apt</name>
    <name type="ordered locus">M28_Spy0708</name>
</gene>
<protein>
    <recommendedName>
        <fullName evidence="1">Adenine phosphoribosyltransferase</fullName>
        <shortName evidence="1">APRT</shortName>
        <ecNumber evidence="1">2.4.2.7</ecNumber>
    </recommendedName>
</protein>
<comment type="function">
    <text evidence="1">Catalyzes a salvage reaction resulting in the formation of AMP, that is energically less costly than de novo synthesis.</text>
</comment>
<comment type="catalytic activity">
    <reaction evidence="1">
        <text>AMP + diphosphate = 5-phospho-alpha-D-ribose 1-diphosphate + adenine</text>
        <dbReference type="Rhea" id="RHEA:16609"/>
        <dbReference type="ChEBI" id="CHEBI:16708"/>
        <dbReference type="ChEBI" id="CHEBI:33019"/>
        <dbReference type="ChEBI" id="CHEBI:58017"/>
        <dbReference type="ChEBI" id="CHEBI:456215"/>
        <dbReference type="EC" id="2.4.2.7"/>
    </reaction>
</comment>
<comment type="pathway">
    <text evidence="1">Purine metabolism; AMP biosynthesis via salvage pathway; AMP from adenine: step 1/1.</text>
</comment>
<comment type="subunit">
    <text evidence="1">Homodimer.</text>
</comment>
<comment type="subcellular location">
    <subcellularLocation>
        <location evidence="1">Cytoplasm</location>
    </subcellularLocation>
</comment>
<comment type="similarity">
    <text evidence="1">Belongs to the purine/pyrimidine phosphoribosyltransferase family.</text>
</comment>
<accession>Q48TY5</accession>
<name>APT_STRPM</name>
<evidence type="ECO:0000255" key="1">
    <source>
        <dbReference type="HAMAP-Rule" id="MF_00004"/>
    </source>
</evidence>
<organism>
    <name type="scientific">Streptococcus pyogenes serotype M28 (strain MGAS6180)</name>
    <dbReference type="NCBI Taxonomy" id="319701"/>
    <lineage>
        <taxon>Bacteria</taxon>
        <taxon>Bacillati</taxon>
        <taxon>Bacillota</taxon>
        <taxon>Bacilli</taxon>
        <taxon>Lactobacillales</taxon>
        <taxon>Streptococcaceae</taxon>
        <taxon>Streptococcus</taxon>
    </lineage>
</organism>
<reference key="1">
    <citation type="journal article" date="2005" name="J. Infect. Dis.">
        <title>Genome sequence of a serotype M28 strain of group A Streptococcus: potential new insights into puerperal sepsis and bacterial disease specificity.</title>
        <authorList>
            <person name="Green N.M."/>
            <person name="Zhang S."/>
            <person name="Porcella S.F."/>
            <person name="Nagiec M.J."/>
            <person name="Barbian K.D."/>
            <person name="Beres S.B."/>
            <person name="Lefebvre R.B."/>
            <person name="Musser J.M."/>
        </authorList>
    </citation>
    <scope>NUCLEOTIDE SEQUENCE [LARGE SCALE GENOMIC DNA]</scope>
    <source>
        <strain>MGAS6180</strain>
    </source>
</reference>
<feature type="chain" id="PRO_1000000357" description="Adenine phosphoribosyltransferase">
    <location>
        <begin position="1"/>
        <end position="172"/>
    </location>
</feature>
<sequence length="172" mass="18687">MDLTNYIASIKDYPKAGITFRDISPLMADGKAYSYAIREIAQYACDKDIDMVVGPEARGFIIGCPVAVELGIGFAPVRKPGKLPRDVVSADYEKEYGLDTLTMHADAIKPGQRVLIVDDLLATGGTVKATIEMIEKLGGIVAGCAFLIELEGLNGRHAIRNYDYKVLMQFPG</sequence>